<reference key="1">
    <citation type="journal article" date="1998" name="Biochem. Biophys. Res. Commun.">
        <title>Cloning of the histidine biosynthetic genes of Corynebacterium glutamicum: organization and sequencing analysis of the hisA, impA, and hisF gene cluster.</title>
        <authorList>
            <person name="Jung S.-I."/>
            <person name="Han M.-S."/>
            <person name="Kwon J.-H."/>
            <person name="Cheon C.-I."/>
            <person name="Min K.-H."/>
            <person name="Lee M.-S."/>
        </authorList>
    </citation>
    <scope>NUCLEOTIDE SEQUENCE [GENOMIC DNA]</scope>
    <source>
        <strain>ATCC 13059 / LMG 3658 / NCIB 10332 / AS019 / 613</strain>
    </source>
</reference>
<reference key="2">
    <citation type="journal article" date="2003" name="Appl. Microbiol. Biotechnol.">
        <title>The Corynebacterium glutamicum genome: features and impacts on biotechnological processes.</title>
        <authorList>
            <person name="Ikeda M."/>
            <person name="Nakagawa S."/>
        </authorList>
    </citation>
    <scope>NUCLEOTIDE SEQUENCE [LARGE SCALE GENOMIC DNA]</scope>
    <source>
        <strain>ATCC 13032 / DSM 20300 / JCM 1318 / BCRC 11384 / CCUG 27702 / LMG 3730 / NBRC 12168 / NCIMB 10025 / NRRL B-2784 / 534</strain>
    </source>
</reference>
<reference key="3">
    <citation type="journal article" date="2003" name="J. Biotechnol.">
        <title>The complete Corynebacterium glutamicum ATCC 13032 genome sequence and its impact on the production of L-aspartate-derived amino acids and vitamins.</title>
        <authorList>
            <person name="Kalinowski J."/>
            <person name="Bathe B."/>
            <person name="Bartels D."/>
            <person name="Bischoff N."/>
            <person name="Bott M."/>
            <person name="Burkovski A."/>
            <person name="Dusch N."/>
            <person name="Eggeling L."/>
            <person name="Eikmanns B.J."/>
            <person name="Gaigalat L."/>
            <person name="Goesmann A."/>
            <person name="Hartmann M."/>
            <person name="Huthmacher K."/>
            <person name="Kraemer R."/>
            <person name="Linke B."/>
            <person name="McHardy A.C."/>
            <person name="Meyer F."/>
            <person name="Moeckel B."/>
            <person name="Pfefferle W."/>
            <person name="Puehler A."/>
            <person name="Rey D.A."/>
            <person name="Rueckert C."/>
            <person name="Rupp O."/>
            <person name="Sahm H."/>
            <person name="Wendisch V.F."/>
            <person name="Wiegraebe I."/>
            <person name="Tauch A."/>
        </authorList>
    </citation>
    <scope>NUCLEOTIDE SEQUENCE [LARGE SCALE GENOMIC DNA]</scope>
    <source>
        <strain>ATCC 13032 / DSM 20300 / JCM 1318 / BCRC 11384 / CCUG 27702 / LMG 3730 / NBRC 12168 / NCIMB 10025 / NRRL B-2784 / 534</strain>
    </source>
</reference>
<proteinExistence type="inferred from homology"/>
<gene>
    <name type="primary">hisA</name>
    <name type="ordered locus">Cgl2096</name>
    <name type="ordered locus">cg2299</name>
</gene>
<comment type="catalytic activity">
    <reaction>
        <text>1-(5-phospho-beta-D-ribosyl)-5-[(5-phospho-beta-D-ribosylamino)methylideneamino]imidazole-4-carboxamide = 5-[(5-phospho-1-deoxy-D-ribulos-1-ylimino)methylamino]-1-(5-phospho-beta-D-ribosyl)imidazole-4-carboxamide</text>
        <dbReference type="Rhea" id="RHEA:15469"/>
        <dbReference type="ChEBI" id="CHEBI:58435"/>
        <dbReference type="ChEBI" id="CHEBI:58525"/>
        <dbReference type="EC" id="5.3.1.16"/>
    </reaction>
</comment>
<comment type="pathway">
    <text>Amino-acid biosynthesis; L-histidine biosynthesis; L-histidine from 5-phospho-alpha-D-ribose 1-diphosphate: step 4/9.</text>
</comment>
<comment type="subcellular location">
    <subcellularLocation>
        <location evidence="1">Cytoplasm</location>
    </subcellularLocation>
</comment>
<comment type="similarity">
    <text evidence="2">Belongs to the HisA/HisF family.</text>
</comment>
<comment type="caution">
    <text evidence="2">Ala-129 is present instead of the conserved Asp which is expected to be an active site residue.</text>
</comment>
<keyword id="KW-0028">Amino-acid biosynthesis</keyword>
<keyword id="KW-0963">Cytoplasm</keyword>
<keyword id="KW-0368">Histidine biosynthesis</keyword>
<keyword id="KW-0413">Isomerase</keyword>
<keyword id="KW-1185">Reference proteome</keyword>
<protein>
    <recommendedName>
        <fullName>1-(5-phosphoribosyl)-5-[(5-phosphoribosylamino)methylideneamino] imidazole-4-carboxamide isomerase</fullName>
        <ecNumber>5.3.1.16</ecNumber>
    </recommendedName>
    <alternativeName>
        <fullName>Phosphoribosylformimino-5-aminoimidazole carboxamide ribotide isomerase</fullName>
    </alternativeName>
</protein>
<dbReference type="EC" id="5.3.1.16"/>
<dbReference type="EMBL" id="AF051846">
    <property type="protein sequence ID" value="AAC05575.1"/>
    <property type="molecule type" value="Genomic_DNA"/>
</dbReference>
<dbReference type="EMBL" id="BA000036">
    <property type="protein sequence ID" value="BAB99489.1"/>
    <property type="molecule type" value="Genomic_DNA"/>
</dbReference>
<dbReference type="EMBL" id="BX927154">
    <property type="protein sequence ID" value="CAF20432.1"/>
    <property type="molecule type" value="Genomic_DNA"/>
</dbReference>
<dbReference type="PIR" id="JE0213">
    <property type="entry name" value="JE0213"/>
</dbReference>
<dbReference type="RefSeq" id="NP_601295.1">
    <property type="nucleotide sequence ID" value="NC_003450.3"/>
</dbReference>
<dbReference type="SMR" id="O68602"/>
<dbReference type="STRING" id="196627.cg2299"/>
<dbReference type="KEGG" id="cgb:cg2299"/>
<dbReference type="KEGG" id="cgl:Cgl2096"/>
<dbReference type="PATRIC" id="fig|196627.13.peg.2032"/>
<dbReference type="eggNOG" id="COG0106">
    <property type="taxonomic scope" value="Bacteria"/>
</dbReference>
<dbReference type="HOGENOM" id="CLU_048577_1_1_11"/>
<dbReference type="OrthoDB" id="9807749at2"/>
<dbReference type="BioCyc" id="CORYNE:G18NG-11688-MONOMER"/>
<dbReference type="UniPathway" id="UPA00031">
    <property type="reaction ID" value="UER00009"/>
</dbReference>
<dbReference type="Proteomes" id="UP000000582">
    <property type="component" value="Chromosome"/>
</dbReference>
<dbReference type="Proteomes" id="UP000001009">
    <property type="component" value="Chromosome"/>
</dbReference>
<dbReference type="GO" id="GO:0005737">
    <property type="term" value="C:cytoplasm"/>
    <property type="evidence" value="ECO:0007669"/>
    <property type="project" value="UniProtKB-SubCell"/>
</dbReference>
<dbReference type="GO" id="GO:0003949">
    <property type="term" value="F:1-(5-phosphoribosyl)-5-[(5-phosphoribosylamino)methylideneamino]imidazole-4-carboxamide isomerase activity"/>
    <property type="evidence" value="ECO:0007669"/>
    <property type="project" value="UniProtKB-UniRule"/>
</dbReference>
<dbReference type="GO" id="GO:0004640">
    <property type="term" value="F:phosphoribosylanthranilate isomerase activity"/>
    <property type="evidence" value="ECO:0007669"/>
    <property type="project" value="InterPro"/>
</dbReference>
<dbReference type="GO" id="GO:0000105">
    <property type="term" value="P:L-histidine biosynthetic process"/>
    <property type="evidence" value="ECO:0007669"/>
    <property type="project" value="UniProtKB-UniRule"/>
</dbReference>
<dbReference type="GO" id="GO:0000162">
    <property type="term" value="P:L-tryptophan biosynthetic process"/>
    <property type="evidence" value="ECO:0007669"/>
    <property type="project" value="InterPro"/>
</dbReference>
<dbReference type="CDD" id="cd04732">
    <property type="entry name" value="HisA"/>
    <property type="match status" value="1"/>
</dbReference>
<dbReference type="FunFam" id="3.20.20.70:FF:000009">
    <property type="entry name" value="1-(5-phosphoribosyl)-5-[(5-phosphoribosylamino)methylideneamino] imidazole-4-carboxamide isomerase"/>
    <property type="match status" value="1"/>
</dbReference>
<dbReference type="Gene3D" id="3.20.20.70">
    <property type="entry name" value="Aldolase class I"/>
    <property type="match status" value="1"/>
</dbReference>
<dbReference type="HAMAP" id="MF_01014">
    <property type="entry name" value="HisA"/>
    <property type="match status" value="1"/>
</dbReference>
<dbReference type="InterPro" id="IPR013785">
    <property type="entry name" value="Aldolase_TIM"/>
</dbReference>
<dbReference type="InterPro" id="IPR006062">
    <property type="entry name" value="His_biosynth"/>
</dbReference>
<dbReference type="InterPro" id="IPR010188">
    <property type="entry name" value="HisA/PriA_Actinobacteria"/>
</dbReference>
<dbReference type="InterPro" id="IPR044524">
    <property type="entry name" value="Isoase_HisA-like"/>
</dbReference>
<dbReference type="InterPro" id="IPR023016">
    <property type="entry name" value="Isoase_HisA-like_bact"/>
</dbReference>
<dbReference type="InterPro" id="IPR011060">
    <property type="entry name" value="RibuloseP-bd_barrel"/>
</dbReference>
<dbReference type="NCBIfam" id="TIGR01919">
    <property type="entry name" value="hisA-trpF"/>
    <property type="match status" value="1"/>
</dbReference>
<dbReference type="PANTHER" id="PTHR43090">
    <property type="entry name" value="1-(5-PHOSPHORIBOSYL)-5-[(5-PHOSPHORIBOSYLAMINO)METHYLIDENEAMINO] IMIDAZOLE-4-CARBOXAMIDE ISOMERASE"/>
    <property type="match status" value="1"/>
</dbReference>
<dbReference type="PANTHER" id="PTHR43090:SF2">
    <property type="entry name" value="1-(5-PHOSPHORIBOSYL)-5-[(5-PHOSPHORIBOSYLAMINO)METHYLIDENEAMINO] IMIDAZOLE-4-CARBOXAMIDE ISOMERASE"/>
    <property type="match status" value="1"/>
</dbReference>
<dbReference type="Pfam" id="PF00977">
    <property type="entry name" value="His_biosynth"/>
    <property type="match status" value="1"/>
</dbReference>
<dbReference type="SUPFAM" id="SSF51366">
    <property type="entry name" value="Ribulose-phoshate binding barrel"/>
    <property type="match status" value="1"/>
</dbReference>
<feature type="chain" id="PRO_0000142001" description="1-(5-phosphoribosyl)-5-[(5-phosphoribosylamino)methylideneamino] imidazole-4-carboxamide isomerase">
    <location>
        <begin position="1"/>
        <end position="246"/>
    </location>
</feature>
<feature type="active site" description="Proton acceptor" evidence="1">
    <location>
        <position position="10"/>
    </location>
</feature>
<feature type="sequence conflict" description="In Ref. 1; AAC05575." evidence="2" ref="1">
    <original>G</original>
    <variation>S</variation>
    <location>
        <position position="82"/>
    </location>
</feature>
<feature type="sequence conflict" description="In Ref. 1; AAC05575." evidence="2" ref="1">
    <original>ERA</original>
    <variation>DTQ</variation>
    <location>
        <begin position="90"/>
        <end position="92"/>
    </location>
</feature>
<feature type="sequence conflict" description="In Ref. 1; AAC05575." evidence="2" ref="1">
    <original>A</original>
    <variation>L</variation>
    <location>
        <position position="105"/>
    </location>
</feature>
<feature type="sequence conflict" description="In Ref. 1; AAC05575." evidence="2" ref="1">
    <original>RYGEKIAVD</original>
    <variation>AMARRLLS</variation>
    <location>
        <begin position="119"/>
        <end position="127"/>
    </location>
</feature>
<feature type="sequence conflict" description="In Ref. 1; AAC05575." evidence="2" ref="1">
    <original>R</original>
    <variation>C</variation>
    <location>
        <position position="157"/>
    </location>
</feature>
<feature type="sequence conflict" description="In Ref. 1; AAC05575." evidence="2" ref="1">
    <original>PIVA</original>
    <variation>TYLT</variation>
    <location>
        <begin position="195"/>
        <end position="198"/>
    </location>
</feature>
<organism>
    <name type="scientific">Corynebacterium glutamicum (strain ATCC 13032 / DSM 20300 / JCM 1318 / BCRC 11384 / CCUG 27702 / LMG 3730 / NBRC 12168 / NCIMB 10025 / NRRL B-2784 / 534)</name>
    <dbReference type="NCBI Taxonomy" id="196627"/>
    <lineage>
        <taxon>Bacteria</taxon>
        <taxon>Bacillati</taxon>
        <taxon>Actinomycetota</taxon>
        <taxon>Actinomycetes</taxon>
        <taxon>Mycobacteriales</taxon>
        <taxon>Corynebacteriaceae</taxon>
        <taxon>Corynebacterium</taxon>
    </lineage>
</organism>
<name>HIS4_CORGL</name>
<sequence length="246" mass="26609">MTFTILPAVDVVNGQAVRLDQGEAGTEKSYGTPLESALKWQEQGAKWLHFVDLDAAFNRGSNHEMMAEIVGKLDVDVELTGGIRDDESLERALATGARRVNIGTAALEKPEWIASAIQRYGEKIAVDIAVRLEDGEWRTRGNGWVSDGGDLWEVLERLDSQGCARFVVTDVSKDGTLSGPNVELLREVAAATDAPIVASGGISVLEDVLELAKYQDEGIDSVIIGKALYEHKFTLEEALAAVEKLG</sequence>
<evidence type="ECO:0000250" key="1"/>
<evidence type="ECO:0000305" key="2"/>
<accession>O68602</accession>